<feature type="chain" id="PRO_1000094948" description="Deoxyuridine 5'-triphosphate nucleotidohydrolase">
    <location>
        <begin position="1"/>
        <end position="148"/>
    </location>
</feature>
<feature type="binding site" evidence="1">
    <location>
        <begin position="67"/>
        <end position="69"/>
    </location>
    <ligand>
        <name>substrate</name>
    </ligand>
</feature>
<feature type="binding site" evidence="1">
    <location>
        <position position="80"/>
    </location>
    <ligand>
        <name>substrate</name>
    </ligand>
</feature>
<feature type="binding site" evidence="1">
    <location>
        <begin position="84"/>
        <end position="86"/>
    </location>
    <ligand>
        <name>substrate</name>
    </ligand>
</feature>
<feature type="binding site" evidence="1">
    <location>
        <position position="94"/>
    </location>
    <ligand>
        <name>substrate</name>
    </ligand>
</feature>
<sequence>MKLDIKILDPRMREQLPAYATTGSAGLDLRACLDAPLTLEPGQTVLVPTGLAIHLADPGYAALILPRSGMGHKHGIVLGNLVGLIDSDYQGQLMISTWNRGTTTFTLNPMERLAQLVIVPVVQATFNIVDEFDTSERGEGGFGSTGKH</sequence>
<evidence type="ECO:0000255" key="1">
    <source>
        <dbReference type="HAMAP-Rule" id="MF_00116"/>
    </source>
</evidence>
<proteinExistence type="inferred from homology"/>
<organism>
    <name type="scientific">Paraburkholderia phymatum (strain DSM 17167 / CIP 108236 / LMG 21445 / STM815)</name>
    <name type="common">Burkholderia phymatum</name>
    <dbReference type="NCBI Taxonomy" id="391038"/>
    <lineage>
        <taxon>Bacteria</taxon>
        <taxon>Pseudomonadati</taxon>
        <taxon>Pseudomonadota</taxon>
        <taxon>Betaproteobacteria</taxon>
        <taxon>Burkholderiales</taxon>
        <taxon>Burkholderiaceae</taxon>
        <taxon>Paraburkholderia</taxon>
    </lineage>
</organism>
<protein>
    <recommendedName>
        <fullName evidence="1">Deoxyuridine 5'-triphosphate nucleotidohydrolase</fullName>
        <shortName evidence="1">dUTPase</shortName>
        <ecNumber evidence="1">3.6.1.23</ecNumber>
    </recommendedName>
    <alternativeName>
        <fullName evidence="1">dUTP pyrophosphatase</fullName>
    </alternativeName>
</protein>
<gene>
    <name evidence="1" type="primary">dut</name>
    <name type="ordered locus">Bphy_0570</name>
</gene>
<dbReference type="EC" id="3.6.1.23" evidence="1"/>
<dbReference type="EMBL" id="CP001043">
    <property type="protein sequence ID" value="ACC69761.1"/>
    <property type="molecule type" value="Genomic_DNA"/>
</dbReference>
<dbReference type="RefSeq" id="WP_012399984.1">
    <property type="nucleotide sequence ID" value="NC_010622.1"/>
</dbReference>
<dbReference type="SMR" id="B2JDY5"/>
<dbReference type="STRING" id="391038.Bphy_0570"/>
<dbReference type="KEGG" id="bph:Bphy_0570"/>
<dbReference type="eggNOG" id="COG0756">
    <property type="taxonomic scope" value="Bacteria"/>
</dbReference>
<dbReference type="HOGENOM" id="CLU_068508_1_1_4"/>
<dbReference type="OrthoDB" id="9809956at2"/>
<dbReference type="UniPathway" id="UPA00610">
    <property type="reaction ID" value="UER00666"/>
</dbReference>
<dbReference type="Proteomes" id="UP000001192">
    <property type="component" value="Chromosome 1"/>
</dbReference>
<dbReference type="GO" id="GO:0004170">
    <property type="term" value="F:dUTP diphosphatase activity"/>
    <property type="evidence" value="ECO:0007669"/>
    <property type="project" value="UniProtKB-UniRule"/>
</dbReference>
<dbReference type="GO" id="GO:0000287">
    <property type="term" value="F:magnesium ion binding"/>
    <property type="evidence" value="ECO:0007669"/>
    <property type="project" value="UniProtKB-UniRule"/>
</dbReference>
<dbReference type="GO" id="GO:0006226">
    <property type="term" value="P:dUMP biosynthetic process"/>
    <property type="evidence" value="ECO:0007669"/>
    <property type="project" value="UniProtKB-UniRule"/>
</dbReference>
<dbReference type="GO" id="GO:0046081">
    <property type="term" value="P:dUTP catabolic process"/>
    <property type="evidence" value="ECO:0007669"/>
    <property type="project" value="InterPro"/>
</dbReference>
<dbReference type="CDD" id="cd07557">
    <property type="entry name" value="trimeric_dUTPase"/>
    <property type="match status" value="1"/>
</dbReference>
<dbReference type="FunFam" id="2.70.40.10:FF:000002">
    <property type="entry name" value="dUTP diphosphatase"/>
    <property type="match status" value="1"/>
</dbReference>
<dbReference type="Gene3D" id="2.70.40.10">
    <property type="match status" value="1"/>
</dbReference>
<dbReference type="HAMAP" id="MF_00116">
    <property type="entry name" value="dUTPase_bact"/>
    <property type="match status" value="1"/>
</dbReference>
<dbReference type="InterPro" id="IPR008181">
    <property type="entry name" value="dUTPase"/>
</dbReference>
<dbReference type="InterPro" id="IPR029054">
    <property type="entry name" value="dUTPase-like"/>
</dbReference>
<dbReference type="InterPro" id="IPR036157">
    <property type="entry name" value="dUTPase-like_sf"/>
</dbReference>
<dbReference type="InterPro" id="IPR033704">
    <property type="entry name" value="dUTPase_trimeric"/>
</dbReference>
<dbReference type="NCBIfam" id="TIGR00576">
    <property type="entry name" value="dut"/>
    <property type="match status" value="1"/>
</dbReference>
<dbReference type="NCBIfam" id="NF001862">
    <property type="entry name" value="PRK00601.1"/>
    <property type="match status" value="1"/>
</dbReference>
<dbReference type="PANTHER" id="PTHR11241">
    <property type="entry name" value="DEOXYURIDINE 5'-TRIPHOSPHATE NUCLEOTIDOHYDROLASE"/>
    <property type="match status" value="1"/>
</dbReference>
<dbReference type="PANTHER" id="PTHR11241:SF0">
    <property type="entry name" value="DEOXYURIDINE 5'-TRIPHOSPHATE NUCLEOTIDOHYDROLASE"/>
    <property type="match status" value="1"/>
</dbReference>
<dbReference type="Pfam" id="PF00692">
    <property type="entry name" value="dUTPase"/>
    <property type="match status" value="1"/>
</dbReference>
<dbReference type="SUPFAM" id="SSF51283">
    <property type="entry name" value="dUTPase-like"/>
    <property type="match status" value="1"/>
</dbReference>
<accession>B2JDY5</accession>
<keyword id="KW-0378">Hydrolase</keyword>
<keyword id="KW-0460">Magnesium</keyword>
<keyword id="KW-0479">Metal-binding</keyword>
<keyword id="KW-0546">Nucleotide metabolism</keyword>
<keyword id="KW-1185">Reference proteome</keyword>
<reference key="1">
    <citation type="journal article" date="2014" name="Stand. Genomic Sci.">
        <title>Complete genome sequence of Burkholderia phymatum STM815(T), a broad host range and efficient nitrogen-fixing symbiont of Mimosa species.</title>
        <authorList>
            <person name="Moulin L."/>
            <person name="Klonowska A."/>
            <person name="Caroline B."/>
            <person name="Booth K."/>
            <person name="Vriezen J.A."/>
            <person name="Melkonian R."/>
            <person name="James E.K."/>
            <person name="Young J.P."/>
            <person name="Bena G."/>
            <person name="Hauser L."/>
            <person name="Land M."/>
            <person name="Kyrpides N."/>
            <person name="Bruce D."/>
            <person name="Chain P."/>
            <person name="Copeland A."/>
            <person name="Pitluck S."/>
            <person name="Woyke T."/>
            <person name="Lizotte-Waniewski M."/>
            <person name="Bristow J."/>
            <person name="Riley M."/>
        </authorList>
    </citation>
    <scope>NUCLEOTIDE SEQUENCE [LARGE SCALE GENOMIC DNA]</scope>
    <source>
        <strain>DSM 17167 / CIP 108236 / LMG 21445 / STM815</strain>
    </source>
</reference>
<comment type="function">
    <text evidence="1">This enzyme is involved in nucleotide metabolism: it produces dUMP, the immediate precursor of thymidine nucleotides and it decreases the intracellular concentration of dUTP so that uracil cannot be incorporated into DNA.</text>
</comment>
<comment type="catalytic activity">
    <reaction evidence="1">
        <text>dUTP + H2O = dUMP + diphosphate + H(+)</text>
        <dbReference type="Rhea" id="RHEA:10248"/>
        <dbReference type="ChEBI" id="CHEBI:15377"/>
        <dbReference type="ChEBI" id="CHEBI:15378"/>
        <dbReference type="ChEBI" id="CHEBI:33019"/>
        <dbReference type="ChEBI" id="CHEBI:61555"/>
        <dbReference type="ChEBI" id="CHEBI:246422"/>
        <dbReference type="EC" id="3.6.1.23"/>
    </reaction>
</comment>
<comment type="cofactor">
    <cofactor evidence="1">
        <name>Mg(2+)</name>
        <dbReference type="ChEBI" id="CHEBI:18420"/>
    </cofactor>
</comment>
<comment type="pathway">
    <text evidence="1">Pyrimidine metabolism; dUMP biosynthesis; dUMP from dCTP (dUTP route): step 2/2.</text>
</comment>
<comment type="similarity">
    <text evidence="1">Belongs to the dUTPase family.</text>
</comment>
<name>DUT_PARP8</name>